<evidence type="ECO:0000305" key="1"/>
<keyword id="KW-0020">Allergen</keyword>
<keyword id="KW-0903">Direct protein sequencing</keyword>
<keyword id="KW-0964">Secreted</keyword>
<proteinExistence type="evidence at protein level"/>
<sequence length="125" mass="13366">GKMKFKDCGKGEVTELDITDCSGDFCVIHRGKPLTLEAKFAANQDTTKATIKVLAKVAGTPIQVPGLETDGCKFVKCPIKKGDPIDFKYTTTVPAILPKVKAEVTAELVGDHGVLACGRFGRQVE</sequence>
<dbReference type="EMBL" id="AJ272216">
    <property type="protein sequence ID" value="CAB76459.1"/>
    <property type="molecule type" value="mRNA"/>
</dbReference>
<dbReference type="SMR" id="Q9NFQ4"/>
<dbReference type="Allergome" id="365">
    <property type="allergen name" value="Gly d 2"/>
</dbReference>
<dbReference type="Allergome" id="367">
    <property type="allergen name" value="Gly d 2.0201"/>
</dbReference>
<dbReference type="GO" id="GO:0005576">
    <property type="term" value="C:extracellular region"/>
    <property type="evidence" value="ECO:0007669"/>
    <property type="project" value="UniProtKB-SubCell"/>
</dbReference>
<dbReference type="GO" id="GO:0032934">
    <property type="term" value="F:sterol binding"/>
    <property type="evidence" value="ECO:0007669"/>
    <property type="project" value="InterPro"/>
</dbReference>
<dbReference type="GO" id="GO:0015918">
    <property type="term" value="P:sterol transport"/>
    <property type="evidence" value="ECO:0007669"/>
    <property type="project" value="InterPro"/>
</dbReference>
<dbReference type="CDD" id="cd00918">
    <property type="entry name" value="Der-p2_like"/>
    <property type="match status" value="1"/>
</dbReference>
<dbReference type="FunFam" id="2.60.40.770:FF:000001">
    <property type="entry name" value="NPC intracellular cholesterol transporter 2"/>
    <property type="match status" value="1"/>
</dbReference>
<dbReference type="Gene3D" id="2.60.40.770">
    <property type="match status" value="1"/>
</dbReference>
<dbReference type="InterPro" id="IPR014756">
    <property type="entry name" value="Ig_E-set"/>
</dbReference>
<dbReference type="InterPro" id="IPR003172">
    <property type="entry name" value="ML_dom"/>
</dbReference>
<dbReference type="InterPro" id="IPR039670">
    <property type="entry name" value="NPC2-like"/>
</dbReference>
<dbReference type="PANTHER" id="PTHR11306">
    <property type="entry name" value="NIEMANN PICK TYPE C2 PROTEIN NPC2-RELATED"/>
    <property type="match status" value="1"/>
</dbReference>
<dbReference type="PANTHER" id="PTHR11306:SF68">
    <property type="entry name" value="NPC INTRACELLULAR CHOLESTEROL TRANSPORTER 2"/>
    <property type="match status" value="1"/>
</dbReference>
<dbReference type="Pfam" id="PF02221">
    <property type="entry name" value="E1_DerP2_DerF2"/>
    <property type="match status" value="1"/>
</dbReference>
<dbReference type="SMART" id="SM00737">
    <property type="entry name" value="ML"/>
    <property type="match status" value="1"/>
</dbReference>
<dbReference type="SUPFAM" id="SSF81296">
    <property type="entry name" value="E set domains"/>
    <property type="match status" value="1"/>
</dbReference>
<name>ALL22_GLYDO</name>
<protein>
    <recommendedName>
        <fullName>Mite group 2 allergen Gly d 2.02</fullName>
    </recommendedName>
    <allergenName>Gly d 2.02</allergenName>
</protein>
<accession>Q9NFQ4</accession>
<reference key="1">
    <citation type="journal article" date="2001" name="J. Allergy Clin. Immunol.">
        <title>Cross-reactivity studies of a new group 2 allergen from the dust mite Glycyphagus domesticus, Gly d 2, and group 2 allergens from Dermatophagoides pteronyssinus, Lepidoglyphus destructor, and Tyrophagus putrescentiae with recombinant allergens.</title>
        <authorList>
            <person name="Gafvelin G."/>
            <person name="Johansson E."/>
            <person name="Lundin A."/>
            <person name="Smith A.M."/>
            <person name="Chapman M.D."/>
            <person name="Benjamin D.C."/>
            <person name="Derewenda U."/>
            <person name="van Hage-Hamsten M."/>
        </authorList>
    </citation>
    <scope>NUCLEOTIDE SEQUENCE [MRNA]</scope>
    <scope>PROTEIN SEQUENCE OF 1-18</scope>
</reference>
<feature type="chain" id="PRO_0000221049" description="Mite group 2 allergen Gly d 2.02">
    <location>
        <begin position="1"/>
        <end position="125"/>
    </location>
</feature>
<organism>
    <name type="scientific">Glycyphagus domesticus</name>
    <name type="common">House itch mite</name>
    <name type="synonym">Acarus domesticus</name>
    <dbReference type="NCBI Taxonomy" id="105145"/>
    <lineage>
        <taxon>Eukaryota</taxon>
        <taxon>Metazoa</taxon>
        <taxon>Ecdysozoa</taxon>
        <taxon>Arthropoda</taxon>
        <taxon>Chelicerata</taxon>
        <taxon>Arachnida</taxon>
        <taxon>Acari</taxon>
        <taxon>Acariformes</taxon>
        <taxon>Sarcoptiformes</taxon>
        <taxon>Astigmata</taxon>
        <taxon>Glycyphagoidea</taxon>
        <taxon>Glycyphagidae</taxon>
        <taxon>Glycyphagus</taxon>
    </lineage>
</organism>
<comment type="subcellular location">
    <subcellularLocation>
        <location>Secreted</location>
    </subcellularLocation>
</comment>
<comment type="allergen">
    <text>Causes an allergic reaction in human. Common symptoms of mite allergy are bronchial asthma, allergic rhinitis and conjunctivitis.</text>
</comment>
<comment type="similarity">
    <text evidence="1">Belongs to the NPC2 family.</text>
</comment>